<dbReference type="EMBL" id="CP000057">
    <property type="protein sequence ID" value="AAX87793.1"/>
    <property type="molecule type" value="Genomic_DNA"/>
</dbReference>
<dbReference type="RefSeq" id="WP_005630575.1">
    <property type="nucleotide sequence ID" value="NC_007146.2"/>
</dbReference>
<dbReference type="SMR" id="Q4QMF4"/>
<dbReference type="GeneID" id="93219781"/>
<dbReference type="KEGG" id="hit:NTHI0900"/>
<dbReference type="HOGENOM" id="CLU_111574_1_0_6"/>
<dbReference type="Proteomes" id="UP000002525">
    <property type="component" value="Chromosome"/>
</dbReference>
<dbReference type="GO" id="GO:0005737">
    <property type="term" value="C:cytoplasm"/>
    <property type="evidence" value="ECO:0007669"/>
    <property type="project" value="UniProtKB-SubCell"/>
</dbReference>
<dbReference type="GO" id="GO:0051082">
    <property type="term" value="F:unfolded protein binding"/>
    <property type="evidence" value="ECO:0007669"/>
    <property type="project" value="InterPro"/>
</dbReference>
<dbReference type="GO" id="GO:0006457">
    <property type="term" value="P:protein folding"/>
    <property type="evidence" value="ECO:0007669"/>
    <property type="project" value="UniProtKB-UniRule"/>
</dbReference>
<dbReference type="GO" id="GO:0051262">
    <property type="term" value="P:protein tetramerization"/>
    <property type="evidence" value="ECO:0007669"/>
    <property type="project" value="InterPro"/>
</dbReference>
<dbReference type="GO" id="GO:0015031">
    <property type="term" value="P:protein transport"/>
    <property type="evidence" value="ECO:0007669"/>
    <property type="project" value="UniProtKB-UniRule"/>
</dbReference>
<dbReference type="CDD" id="cd00557">
    <property type="entry name" value="Translocase_SecB"/>
    <property type="match status" value="1"/>
</dbReference>
<dbReference type="Gene3D" id="3.10.420.10">
    <property type="entry name" value="SecB-like"/>
    <property type="match status" value="1"/>
</dbReference>
<dbReference type="HAMAP" id="MF_00821">
    <property type="entry name" value="SecB"/>
    <property type="match status" value="1"/>
</dbReference>
<dbReference type="InterPro" id="IPR003708">
    <property type="entry name" value="SecB"/>
</dbReference>
<dbReference type="InterPro" id="IPR035958">
    <property type="entry name" value="SecB-like_sf"/>
</dbReference>
<dbReference type="NCBIfam" id="NF004393">
    <property type="entry name" value="PRK05751.1-4"/>
    <property type="match status" value="1"/>
</dbReference>
<dbReference type="NCBIfam" id="TIGR00809">
    <property type="entry name" value="secB"/>
    <property type="match status" value="1"/>
</dbReference>
<dbReference type="PANTHER" id="PTHR36918">
    <property type="match status" value="1"/>
</dbReference>
<dbReference type="PANTHER" id="PTHR36918:SF1">
    <property type="entry name" value="PROTEIN-EXPORT PROTEIN SECB"/>
    <property type="match status" value="1"/>
</dbReference>
<dbReference type="Pfam" id="PF02556">
    <property type="entry name" value="SecB"/>
    <property type="match status" value="1"/>
</dbReference>
<dbReference type="PRINTS" id="PR01594">
    <property type="entry name" value="SECBCHAPRONE"/>
</dbReference>
<dbReference type="SUPFAM" id="SSF54611">
    <property type="entry name" value="SecB-like"/>
    <property type="match status" value="1"/>
</dbReference>
<evidence type="ECO:0000255" key="1">
    <source>
        <dbReference type="HAMAP-Rule" id="MF_00821"/>
    </source>
</evidence>
<accession>Q4QMF4</accession>
<keyword id="KW-0143">Chaperone</keyword>
<keyword id="KW-0963">Cytoplasm</keyword>
<keyword id="KW-0653">Protein transport</keyword>
<keyword id="KW-0811">Translocation</keyword>
<keyword id="KW-0813">Transport</keyword>
<organism>
    <name type="scientific">Haemophilus influenzae (strain 86-028NP)</name>
    <dbReference type="NCBI Taxonomy" id="281310"/>
    <lineage>
        <taxon>Bacteria</taxon>
        <taxon>Pseudomonadati</taxon>
        <taxon>Pseudomonadota</taxon>
        <taxon>Gammaproteobacteria</taxon>
        <taxon>Pasteurellales</taxon>
        <taxon>Pasteurellaceae</taxon>
        <taxon>Haemophilus</taxon>
    </lineage>
</organism>
<feature type="chain" id="PRO_0000055379" description="Protein-export protein SecB">
    <location>
        <begin position="1"/>
        <end position="169"/>
    </location>
</feature>
<comment type="function">
    <text evidence="1">One of the proteins required for the normal export of preproteins out of the cell cytoplasm. It is a molecular chaperone that binds to a subset of precursor proteins, maintaining them in a translocation-competent state. It also specifically binds to its receptor SecA.</text>
</comment>
<comment type="subunit">
    <text evidence="1">Homotetramer, a dimer of dimers. One homotetramer interacts with 1 SecA dimer.</text>
</comment>
<comment type="subcellular location">
    <subcellularLocation>
        <location evidence="1">Cytoplasm</location>
    </subcellularLocation>
</comment>
<comment type="similarity">
    <text evidence="1">Belongs to the SecB family.</text>
</comment>
<sequence length="169" mass="19132">MSEQKQDVAATEEQQPVLQIQRIYVKDVSFEAPNLPHIFQQEWKPKLGFDLSTETTQVGDDLYEVVLNISVETTLEDSGDVAFICEVKQAGVFTISGLEDVQMAHCLTSQCPNMLFPYARELVSNLVNRGTFPALNLSPVNFDALFVEYMNRQQAENAEEKSEEEQTKH</sequence>
<name>SECB_HAEI8</name>
<proteinExistence type="inferred from homology"/>
<protein>
    <recommendedName>
        <fullName evidence="1">Protein-export protein SecB</fullName>
    </recommendedName>
</protein>
<gene>
    <name evidence="1" type="primary">secB</name>
    <name type="ordered locus">NTHI0900</name>
</gene>
<reference key="1">
    <citation type="journal article" date="2005" name="J. Bacteriol.">
        <title>Genomic sequence of an otitis media isolate of nontypeable Haemophilus influenzae: comparative study with H. influenzae serotype d, strain KW20.</title>
        <authorList>
            <person name="Harrison A."/>
            <person name="Dyer D.W."/>
            <person name="Gillaspy A."/>
            <person name="Ray W.C."/>
            <person name="Mungur R."/>
            <person name="Carson M.B."/>
            <person name="Zhong H."/>
            <person name="Gipson J."/>
            <person name="Gipson M."/>
            <person name="Johnson L.S."/>
            <person name="Lewis L."/>
            <person name="Bakaletz L.O."/>
            <person name="Munson R.S. Jr."/>
        </authorList>
    </citation>
    <scope>NUCLEOTIDE SEQUENCE [LARGE SCALE GENOMIC DNA]</scope>
    <source>
        <strain>86-028NP</strain>
    </source>
</reference>